<sequence>MTEIVDITAREILDSRGNPTVEVDVILEDGAMGRAAVPSGASTGAHEAVEKRDGDKARYLGKGVRQAVDAVNGEIYDALSGSDAEDQRRIDRMLIELDGTPNKSRLGANAILGVSLATAKAAASSSALPLYKYVGGVSARILPVPMMNIINGGAHADNPIDIQEFMILPTGAETFSEALRMGAEIFHALKKQLKDAGHNTNVGDEGGFAPNIGSAEEALAFIVKAGEGAGYRCGEDFHLGLDVASTEFFKNGKYVMEGEGKTVDPAGMVEYLAGLVSKFPIVTIEDGCAEDDFDGWKILTERLGGKVQLVGDDLFVTNPERLAVGIEKGLANSILVKVNQIGTLSETLDAVDMAHRNSYTAVMSHRSGETEDSTIADLSVATNCGQIKTGSLARSDRTAKYNQLLRIEEELGDQAIYAGRRALRAL</sequence>
<feature type="chain" id="PRO_1000115895" description="Enolase">
    <location>
        <begin position="1"/>
        <end position="426"/>
    </location>
</feature>
<feature type="active site" description="Proton donor" evidence="1">
    <location>
        <position position="205"/>
    </location>
</feature>
<feature type="active site" description="Proton acceptor" evidence="1">
    <location>
        <position position="337"/>
    </location>
</feature>
<feature type="binding site" evidence="1">
    <location>
        <position position="163"/>
    </location>
    <ligand>
        <name>(2R)-2-phosphoglycerate</name>
        <dbReference type="ChEBI" id="CHEBI:58289"/>
    </ligand>
</feature>
<feature type="binding site" evidence="1">
    <location>
        <position position="242"/>
    </location>
    <ligand>
        <name>Mg(2+)</name>
        <dbReference type="ChEBI" id="CHEBI:18420"/>
    </ligand>
</feature>
<feature type="binding site" evidence="1">
    <location>
        <position position="285"/>
    </location>
    <ligand>
        <name>Mg(2+)</name>
        <dbReference type="ChEBI" id="CHEBI:18420"/>
    </ligand>
</feature>
<feature type="binding site" evidence="1">
    <location>
        <position position="312"/>
    </location>
    <ligand>
        <name>Mg(2+)</name>
        <dbReference type="ChEBI" id="CHEBI:18420"/>
    </ligand>
</feature>
<feature type="binding site" evidence="1">
    <location>
        <position position="337"/>
    </location>
    <ligand>
        <name>(2R)-2-phosphoglycerate</name>
        <dbReference type="ChEBI" id="CHEBI:58289"/>
    </ligand>
</feature>
<feature type="binding site" evidence="1">
    <location>
        <position position="366"/>
    </location>
    <ligand>
        <name>(2R)-2-phosphoglycerate</name>
        <dbReference type="ChEBI" id="CHEBI:58289"/>
    </ligand>
</feature>
<feature type="binding site" evidence="1">
    <location>
        <position position="367"/>
    </location>
    <ligand>
        <name>(2R)-2-phosphoglycerate</name>
        <dbReference type="ChEBI" id="CHEBI:58289"/>
    </ligand>
</feature>
<feature type="binding site" evidence="1">
    <location>
        <position position="388"/>
    </location>
    <ligand>
        <name>(2R)-2-phosphoglycerate</name>
        <dbReference type="ChEBI" id="CHEBI:58289"/>
    </ligand>
</feature>
<reference key="1">
    <citation type="journal article" date="2008" name="BMC Genomics">
        <title>Complete genome of Phenylobacterium zucineum - a novel facultative intracellular bacterium isolated from human erythroleukemia cell line K562.</title>
        <authorList>
            <person name="Luo Y."/>
            <person name="Xu X."/>
            <person name="Ding Z."/>
            <person name="Liu Z."/>
            <person name="Zhang B."/>
            <person name="Yan Z."/>
            <person name="Sun J."/>
            <person name="Hu S."/>
            <person name="Hu X."/>
        </authorList>
    </citation>
    <scope>NUCLEOTIDE SEQUENCE [LARGE SCALE GENOMIC DNA]</scope>
    <source>
        <strain>HLK1</strain>
    </source>
</reference>
<protein>
    <recommendedName>
        <fullName evidence="1">Enolase</fullName>
        <ecNumber evidence="1">4.2.1.11</ecNumber>
    </recommendedName>
    <alternativeName>
        <fullName evidence="1">2-phospho-D-glycerate hydro-lyase</fullName>
    </alternativeName>
    <alternativeName>
        <fullName evidence="1">2-phosphoglycerate dehydratase</fullName>
    </alternativeName>
</protein>
<dbReference type="EC" id="4.2.1.11" evidence="1"/>
<dbReference type="EMBL" id="CP000747">
    <property type="protein sequence ID" value="ACG78158.1"/>
    <property type="molecule type" value="Genomic_DNA"/>
</dbReference>
<dbReference type="RefSeq" id="WP_012522300.1">
    <property type="nucleotide sequence ID" value="NC_011144.1"/>
</dbReference>
<dbReference type="SMR" id="B4RBW1"/>
<dbReference type="STRING" id="450851.PHZ_c1747"/>
<dbReference type="KEGG" id="pzu:PHZ_c1747"/>
<dbReference type="eggNOG" id="COG0148">
    <property type="taxonomic scope" value="Bacteria"/>
</dbReference>
<dbReference type="HOGENOM" id="CLU_031223_2_1_5"/>
<dbReference type="OrthoDB" id="9804716at2"/>
<dbReference type="UniPathway" id="UPA00109">
    <property type="reaction ID" value="UER00187"/>
</dbReference>
<dbReference type="Proteomes" id="UP000001868">
    <property type="component" value="Chromosome"/>
</dbReference>
<dbReference type="GO" id="GO:0009986">
    <property type="term" value="C:cell surface"/>
    <property type="evidence" value="ECO:0007669"/>
    <property type="project" value="UniProtKB-SubCell"/>
</dbReference>
<dbReference type="GO" id="GO:0005576">
    <property type="term" value="C:extracellular region"/>
    <property type="evidence" value="ECO:0007669"/>
    <property type="project" value="UniProtKB-SubCell"/>
</dbReference>
<dbReference type="GO" id="GO:0000015">
    <property type="term" value="C:phosphopyruvate hydratase complex"/>
    <property type="evidence" value="ECO:0007669"/>
    <property type="project" value="InterPro"/>
</dbReference>
<dbReference type="GO" id="GO:0000287">
    <property type="term" value="F:magnesium ion binding"/>
    <property type="evidence" value="ECO:0007669"/>
    <property type="project" value="UniProtKB-UniRule"/>
</dbReference>
<dbReference type="GO" id="GO:0004634">
    <property type="term" value="F:phosphopyruvate hydratase activity"/>
    <property type="evidence" value="ECO:0007669"/>
    <property type="project" value="UniProtKB-UniRule"/>
</dbReference>
<dbReference type="GO" id="GO:0006096">
    <property type="term" value="P:glycolytic process"/>
    <property type="evidence" value="ECO:0007669"/>
    <property type="project" value="UniProtKB-UniRule"/>
</dbReference>
<dbReference type="CDD" id="cd03313">
    <property type="entry name" value="enolase"/>
    <property type="match status" value="1"/>
</dbReference>
<dbReference type="FunFam" id="3.20.20.120:FF:000001">
    <property type="entry name" value="Enolase"/>
    <property type="match status" value="1"/>
</dbReference>
<dbReference type="FunFam" id="3.30.390.10:FF:000001">
    <property type="entry name" value="Enolase"/>
    <property type="match status" value="1"/>
</dbReference>
<dbReference type="Gene3D" id="3.20.20.120">
    <property type="entry name" value="Enolase-like C-terminal domain"/>
    <property type="match status" value="1"/>
</dbReference>
<dbReference type="Gene3D" id="3.30.390.10">
    <property type="entry name" value="Enolase-like, N-terminal domain"/>
    <property type="match status" value="1"/>
</dbReference>
<dbReference type="HAMAP" id="MF_00318">
    <property type="entry name" value="Enolase"/>
    <property type="match status" value="1"/>
</dbReference>
<dbReference type="InterPro" id="IPR000941">
    <property type="entry name" value="Enolase"/>
</dbReference>
<dbReference type="InterPro" id="IPR036849">
    <property type="entry name" value="Enolase-like_C_sf"/>
</dbReference>
<dbReference type="InterPro" id="IPR029017">
    <property type="entry name" value="Enolase-like_N"/>
</dbReference>
<dbReference type="InterPro" id="IPR020810">
    <property type="entry name" value="Enolase_C"/>
</dbReference>
<dbReference type="InterPro" id="IPR020809">
    <property type="entry name" value="Enolase_CS"/>
</dbReference>
<dbReference type="InterPro" id="IPR020811">
    <property type="entry name" value="Enolase_N"/>
</dbReference>
<dbReference type="NCBIfam" id="TIGR01060">
    <property type="entry name" value="eno"/>
    <property type="match status" value="1"/>
</dbReference>
<dbReference type="PANTHER" id="PTHR11902">
    <property type="entry name" value="ENOLASE"/>
    <property type="match status" value="1"/>
</dbReference>
<dbReference type="PANTHER" id="PTHR11902:SF1">
    <property type="entry name" value="ENOLASE"/>
    <property type="match status" value="1"/>
</dbReference>
<dbReference type="Pfam" id="PF00113">
    <property type="entry name" value="Enolase_C"/>
    <property type="match status" value="1"/>
</dbReference>
<dbReference type="Pfam" id="PF03952">
    <property type="entry name" value="Enolase_N"/>
    <property type="match status" value="1"/>
</dbReference>
<dbReference type="PIRSF" id="PIRSF001400">
    <property type="entry name" value="Enolase"/>
    <property type="match status" value="1"/>
</dbReference>
<dbReference type="PRINTS" id="PR00148">
    <property type="entry name" value="ENOLASE"/>
</dbReference>
<dbReference type="SFLD" id="SFLDF00002">
    <property type="entry name" value="enolase"/>
    <property type="match status" value="1"/>
</dbReference>
<dbReference type="SFLD" id="SFLDG00178">
    <property type="entry name" value="enolase"/>
    <property type="match status" value="1"/>
</dbReference>
<dbReference type="SMART" id="SM01192">
    <property type="entry name" value="Enolase_C"/>
    <property type="match status" value="1"/>
</dbReference>
<dbReference type="SMART" id="SM01193">
    <property type="entry name" value="Enolase_N"/>
    <property type="match status" value="1"/>
</dbReference>
<dbReference type="SUPFAM" id="SSF51604">
    <property type="entry name" value="Enolase C-terminal domain-like"/>
    <property type="match status" value="1"/>
</dbReference>
<dbReference type="SUPFAM" id="SSF54826">
    <property type="entry name" value="Enolase N-terminal domain-like"/>
    <property type="match status" value="1"/>
</dbReference>
<dbReference type="PROSITE" id="PS00164">
    <property type="entry name" value="ENOLASE"/>
    <property type="match status" value="1"/>
</dbReference>
<organism>
    <name type="scientific">Phenylobacterium zucineum (strain HLK1)</name>
    <dbReference type="NCBI Taxonomy" id="450851"/>
    <lineage>
        <taxon>Bacteria</taxon>
        <taxon>Pseudomonadati</taxon>
        <taxon>Pseudomonadota</taxon>
        <taxon>Alphaproteobacteria</taxon>
        <taxon>Caulobacterales</taxon>
        <taxon>Caulobacteraceae</taxon>
        <taxon>Phenylobacterium</taxon>
    </lineage>
</organism>
<keyword id="KW-0963">Cytoplasm</keyword>
<keyword id="KW-0324">Glycolysis</keyword>
<keyword id="KW-0456">Lyase</keyword>
<keyword id="KW-0460">Magnesium</keyword>
<keyword id="KW-0479">Metal-binding</keyword>
<keyword id="KW-1185">Reference proteome</keyword>
<keyword id="KW-0964">Secreted</keyword>
<accession>B4RBW1</accession>
<gene>
    <name evidence="1" type="primary">eno</name>
    <name type="ordered locus">PHZ_c1747</name>
</gene>
<name>ENO_PHEZH</name>
<evidence type="ECO:0000255" key="1">
    <source>
        <dbReference type="HAMAP-Rule" id="MF_00318"/>
    </source>
</evidence>
<proteinExistence type="inferred from homology"/>
<comment type="function">
    <text evidence="1">Catalyzes the reversible conversion of 2-phosphoglycerate (2-PG) into phosphoenolpyruvate (PEP). It is essential for the degradation of carbohydrates via glycolysis.</text>
</comment>
<comment type="catalytic activity">
    <reaction evidence="1">
        <text>(2R)-2-phosphoglycerate = phosphoenolpyruvate + H2O</text>
        <dbReference type="Rhea" id="RHEA:10164"/>
        <dbReference type="ChEBI" id="CHEBI:15377"/>
        <dbReference type="ChEBI" id="CHEBI:58289"/>
        <dbReference type="ChEBI" id="CHEBI:58702"/>
        <dbReference type="EC" id="4.2.1.11"/>
    </reaction>
</comment>
<comment type="cofactor">
    <cofactor evidence="1">
        <name>Mg(2+)</name>
        <dbReference type="ChEBI" id="CHEBI:18420"/>
    </cofactor>
    <text evidence="1">Binds a second Mg(2+) ion via substrate during catalysis.</text>
</comment>
<comment type="pathway">
    <text evidence="1">Carbohydrate degradation; glycolysis; pyruvate from D-glyceraldehyde 3-phosphate: step 4/5.</text>
</comment>
<comment type="subcellular location">
    <subcellularLocation>
        <location evidence="1">Cytoplasm</location>
    </subcellularLocation>
    <subcellularLocation>
        <location evidence="1">Secreted</location>
    </subcellularLocation>
    <subcellularLocation>
        <location evidence="1">Cell surface</location>
    </subcellularLocation>
    <text evidence="1">Fractions of enolase are present in both the cytoplasm and on the cell surface.</text>
</comment>
<comment type="similarity">
    <text evidence="1">Belongs to the enolase family.</text>
</comment>